<name>CHI2_METAN</name>
<sequence length="419" mass="43687">MHHLRALVGVGLAGLAAGVPLTDKISVKPRQAPGAQNVVYWGQNGGGTIENNDLAAYCQPNSGIDVLVLAFLYQFGNGGNIPSGTIGQSCYISTSGQGQNCEALTAAIHTCQSAGVKIVLSLGGATSSYSLQTQAQAEQIGQYLWDSYGNSGNKTVQRPFGSNFVNGFDFDIEVNGGSSQYYQYMIAKLRANFASDKSNTYLITGAPQCPIPEPNMGVIISNSVFDHLYVQFYNNNNYTVPCALGINGNAPFNYNNWTSFIADTPSAGAKIFIGVPASPLASTGTPSGAQYYAAPEQLAAIVGEYRSDAHFGGIMMWSAGFSDANVNDGCTYAQQAKSILVNGAPCPSSGPPSSTPATAPAPTATTMPSSTSVSSPTASPTGGTVPQWGQCGGEGYSGPTQCVPPYQCVKQGDWWSSCR</sequence>
<evidence type="ECO:0000255" key="1"/>
<evidence type="ECO:0000255" key="2">
    <source>
        <dbReference type="PROSITE-ProRule" id="PRU00597"/>
    </source>
</evidence>
<evidence type="ECO:0000255" key="3">
    <source>
        <dbReference type="PROSITE-ProRule" id="PRU01258"/>
    </source>
</evidence>
<evidence type="ECO:0000256" key="4">
    <source>
        <dbReference type="SAM" id="MobiDB-lite"/>
    </source>
</evidence>
<evidence type="ECO:0000269" key="5">
    <source>
    </source>
</evidence>
<evidence type="ECO:0000269" key="6">
    <source>
    </source>
</evidence>
<evidence type="ECO:0000305" key="7"/>
<dbReference type="EC" id="3.2.1.14"/>
<dbReference type="EMBL" id="DQ011663">
    <property type="protein sequence ID" value="AAY34347.1"/>
    <property type="molecule type" value="Genomic_DNA"/>
</dbReference>
<dbReference type="SMR" id="Q4U4T0"/>
<dbReference type="CAZy" id="CBM1">
    <property type="family name" value="Carbohydrate-Binding Module Family 1"/>
</dbReference>
<dbReference type="CAZy" id="GH18">
    <property type="family name" value="Glycoside Hydrolase Family 18"/>
</dbReference>
<dbReference type="GlyCosmos" id="Q4U4T0">
    <property type="glycosylation" value="3 sites, No reported glycans"/>
</dbReference>
<dbReference type="VEuPathDB" id="FungiDB:MAN_00045"/>
<dbReference type="OrthoDB" id="6774at5529"/>
<dbReference type="PHI-base" id="PHI:2388"/>
<dbReference type="GO" id="GO:0005576">
    <property type="term" value="C:extracellular region"/>
    <property type="evidence" value="ECO:0007669"/>
    <property type="project" value="UniProtKB-SubCell"/>
</dbReference>
<dbReference type="GO" id="GO:0030248">
    <property type="term" value="F:cellulose binding"/>
    <property type="evidence" value="ECO:0007669"/>
    <property type="project" value="InterPro"/>
</dbReference>
<dbReference type="GO" id="GO:0008061">
    <property type="term" value="F:chitin binding"/>
    <property type="evidence" value="ECO:0007669"/>
    <property type="project" value="UniProtKB-KW"/>
</dbReference>
<dbReference type="GO" id="GO:0008843">
    <property type="term" value="F:endochitinase activity"/>
    <property type="evidence" value="ECO:0007669"/>
    <property type="project" value="UniProtKB-EC"/>
</dbReference>
<dbReference type="GO" id="GO:0006032">
    <property type="term" value="P:chitin catabolic process"/>
    <property type="evidence" value="ECO:0007669"/>
    <property type="project" value="UniProtKB-KW"/>
</dbReference>
<dbReference type="GO" id="GO:0000272">
    <property type="term" value="P:polysaccharide catabolic process"/>
    <property type="evidence" value="ECO:0007669"/>
    <property type="project" value="UniProtKB-KW"/>
</dbReference>
<dbReference type="CDD" id="cd02877">
    <property type="entry name" value="GH18_hevamine_XipI_class_III"/>
    <property type="match status" value="1"/>
</dbReference>
<dbReference type="Gene3D" id="3.20.20.80">
    <property type="entry name" value="Glycosidases"/>
    <property type="match status" value="1"/>
</dbReference>
<dbReference type="InterPro" id="IPR035971">
    <property type="entry name" value="CBD_sf"/>
</dbReference>
<dbReference type="InterPro" id="IPR000254">
    <property type="entry name" value="Cellulose-bd_dom_fun"/>
</dbReference>
<dbReference type="InterPro" id="IPR045321">
    <property type="entry name" value="Cts1-like"/>
</dbReference>
<dbReference type="InterPro" id="IPR001223">
    <property type="entry name" value="Glyco_hydro18_cat"/>
</dbReference>
<dbReference type="InterPro" id="IPR001579">
    <property type="entry name" value="Glyco_hydro_18_chit_AS"/>
</dbReference>
<dbReference type="InterPro" id="IPR017853">
    <property type="entry name" value="Glycoside_hydrolase_SF"/>
</dbReference>
<dbReference type="InterPro" id="IPR050542">
    <property type="entry name" value="Glycosyl_Hydrlase18_Chitinase"/>
</dbReference>
<dbReference type="PANTHER" id="PTHR45708">
    <property type="entry name" value="ENDOCHITINASE"/>
    <property type="match status" value="1"/>
</dbReference>
<dbReference type="PANTHER" id="PTHR45708:SF49">
    <property type="entry name" value="ENDOCHITINASE"/>
    <property type="match status" value="1"/>
</dbReference>
<dbReference type="Pfam" id="PF00734">
    <property type="entry name" value="CBM_1"/>
    <property type="match status" value="1"/>
</dbReference>
<dbReference type="Pfam" id="PF00704">
    <property type="entry name" value="Glyco_hydro_18"/>
    <property type="match status" value="1"/>
</dbReference>
<dbReference type="SMART" id="SM00236">
    <property type="entry name" value="fCBD"/>
    <property type="match status" value="1"/>
</dbReference>
<dbReference type="SUPFAM" id="SSF51445">
    <property type="entry name" value="(Trans)glycosidases"/>
    <property type="match status" value="1"/>
</dbReference>
<dbReference type="SUPFAM" id="SSF57180">
    <property type="entry name" value="Cellulose-binding domain"/>
    <property type="match status" value="1"/>
</dbReference>
<dbReference type="PROSITE" id="PS51164">
    <property type="entry name" value="CBM1_2"/>
    <property type="match status" value="1"/>
</dbReference>
<dbReference type="PROSITE" id="PS01095">
    <property type="entry name" value="GH18_1"/>
    <property type="match status" value="1"/>
</dbReference>
<dbReference type="PROSITE" id="PS51910">
    <property type="entry name" value="GH18_2"/>
    <property type="match status" value="1"/>
</dbReference>
<reference key="1">
    <citation type="journal article" date="2006" name="Curr. Microbiol.">
        <title>Isolation, characterization, and transcriptional analysis of the chitinase chi2 Gene (DQ011663) from the biocontrol fungus Metarhizium anisopliae var. anisopliae.</title>
        <authorList>
            <person name="Baratto C.M."/>
            <person name="Dutra V."/>
            <person name="Boldo J.T."/>
            <person name="Leiria L.B."/>
            <person name="Vainstein M.H."/>
            <person name="Schrank A."/>
        </authorList>
    </citation>
    <scope>NUCLEOTIDE SEQUENCE [GENOMIC DNA]</scope>
    <scope>INDUCTION</scope>
    <source>
        <strain>E6</strain>
    </source>
</reference>
<reference key="2">
    <citation type="journal article" date="2009" name="Curr. Genet.">
        <title>Endochitinase CHI2 of the biocontrol fungus Metarhizium anisopliae affects its virulence toward the cotton stainer bug Dysdercus peruvianus.</title>
        <authorList>
            <person name="Boldo J.T."/>
            <person name="Junges A."/>
            <person name="do Amaral K.B."/>
            <person name="Staats C.C."/>
            <person name="Vainstein M.H."/>
            <person name="Schrank A."/>
        </authorList>
    </citation>
    <scope>DISRUPTION PHENOTYPE</scope>
    <scope>SUBCELLULAR LOCATION</scope>
    <scope>CATALYTIC ACTIVITY</scope>
    <scope>FUNCTION</scope>
    <scope>VIRULENCE</scope>
</reference>
<reference key="3">
    <citation type="journal article" date="2010" name="Gene">
        <title>Evidence of alternative splicing of the chi2 chitinase gene from Metarhizium anisopliae.</title>
        <authorList>
            <person name="Boldo J.T."/>
            <person name="do Amaral K.B."/>
            <person name="Junges A."/>
            <person name="Pinto P.M."/>
            <person name="Staats C.C."/>
            <person name="Vainstein M.H."/>
            <person name="Schrank A."/>
        </authorList>
    </citation>
    <scope>IDENTIFICATION BY MASS SPECTROMETRY</scope>
    <scope>ALTERNATIVE SPLICING (ISOFORM CHI2-1)</scope>
</reference>
<organism>
    <name type="scientific">Metarhizium anisopliae</name>
    <name type="common">Entomophthora anisopliae</name>
    <dbReference type="NCBI Taxonomy" id="5530"/>
    <lineage>
        <taxon>Eukaryota</taxon>
        <taxon>Fungi</taxon>
        <taxon>Dikarya</taxon>
        <taxon>Ascomycota</taxon>
        <taxon>Pezizomycotina</taxon>
        <taxon>Sordariomycetes</taxon>
        <taxon>Hypocreomycetidae</taxon>
        <taxon>Hypocreales</taxon>
        <taxon>Clavicipitaceae</taxon>
        <taxon>Metarhizium</taxon>
    </lineage>
</organism>
<accession>Q4U4T0</accession>
<proteinExistence type="evidence at protein level"/>
<protein>
    <recommendedName>
        <fullName>Endochitinase 2</fullName>
        <ecNumber>3.2.1.14</ecNumber>
    </recommendedName>
    <alternativeName>
        <fullName>Chitinase 2</fullName>
    </alternativeName>
</protein>
<comment type="function">
    <text evidence="6">Secreted chitinase involved in the degradation of chitin, a component of the cell walls of fungi and exoskeletal elements of some animals (including worms and arthropods). Participates in the infection process and directly acts in the penetration process of the host cuticle.</text>
</comment>
<comment type="catalytic activity">
    <reaction evidence="6">
        <text>Random endo-hydrolysis of N-acetyl-beta-D-glucosaminide (1-&gt;4)-beta-linkages in chitin and chitodextrins.</text>
        <dbReference type="EC" id="3.2.1.14"/>
    </reaction>
</comment>
<comment type="subcellular location">
    <subcellularLocation>
        <location evidence="6">Secreted</location>
    </subcellularLocation>
</comment>
<comment type="alternative products">
    <event type="alternative splicing"/>
    <isoform>
        <id>Q4U4T0-1</id>
        <name>chi2-2</name>
        <sequence type="displayed"/>
    </isoform>
    <isoform>
        <id>Q4U4T0-2</id>
        <name>chi2-1</name>
        <sequence type="described" ref="VSP_055327"/>
    </isoform>
</comment>
<comment type="induction">
    <text evidence="5">Only transcribed when chitin is the carbon source. The promoter contains the consensus motif for the creA/crel/crr1 carbon catabolic repressor.</text>
</comment>
<comment type="disruption phenotype">
    <text evidence="6">Decreases the mortality of the host cotton stainer bug Dysdercus peruvianus after infection.</text>
</comment>
<comment type="similarity">
    <text evidence="7">Belongs to the glycosyl hydrolase 18 family. Chitinase class III subfamily.</text>
</comment>
<gene>
    <name type="primary">chi2</name>
</gene>
<feature type="signal peptide" evidence="1">
    <location>
        <begin position="1"/>
        <end position="18"/>
    </location>
</feature>
<feature type="chain" id="PRO_0000429866" description="Endochitinase 2">
    <location>
        <begin position="19"/>
        <end position="419"/>
    </location>
</feature>
<feature type="domain" description="GH18" evidence="3">
    <location>
        <begin position="35"/>
        <end position="343"/>
    </location>
</feature>
<feature type="domain" description="CBM1" evidence="2">
    <location>
        <begin position="383"/>
        <end position="419"/>
    </location>
</feature>
<feature type="region of interest" description="Disordered" evidence="4">
    <location>
        <begin position="343"/>
        <end position="390"/>
    </location>
</feature>
<feature type="compositionally biased region" description="Low complexity" evidence="4">
    <location>
        <begin position="355"/>
        <end position="384"/>
    </location>
</feature>
<feature type="active site" description="Proton donor" evidence="3">
    <location>
        <position position="173"/>
    </location>
</feature>
<feature type="glycosylation site" description="N-linked (GlcNAc...) asparagine" evidence="1">
    <location>
        <position position="153"/>
    </location>
</feature>
<feature type="glycosylation site" description="N-linked (GlcNAc...) asparagine" evidence="1">
    <location>
        <position position="237"/>
    </location>
</feature>
<feature type="glycosylation site" description="N-linked (GlcNAc...) asparagine" evidence="1">
    <location>
        <position position="256"/>
    </location>
</feature>
<feature type="splice variant" id="VSP_055327" description="In isoform chi2-1." evidence="7">
    <original>CGGEGYSGPTQCVPPYQCVKQGDWWSSCR</original>
    <variation>VILSMCSLKKKRISRGSSHSSDV</variation>
    <location>
        <begin position="391"/>
        <end position="419"/>
    </location>
</feature>
<keyword id="KW-0025">Alternative splicing</keyword>
<keyword id="KW-0119">Carbohydrate metabolism</keyword>
<keyword id="KW-0146">Chitin degradation</keyword>
<keyword id="KW-0147">Chitin-binding</keyword>
<keyword id="KW-0325">Glycoprotein</keyword>
<keyword id="KW-0326">Glycosidase</keyword>
<keyword id="KW-0378">Hydrolase</keyword>
<keyword id="KW-0624">Polysaccharide degradation</keyword>
<keyword id="KW-0964">Secreted</keyword>
<keyword id="KW-0732">Signal</keyword>
<keyword id="KW-0843">Virulence</keyword>